<name>SYDND_GEOUR</name>
<gene>
    <name evidence="1" type="primary">aspS</name>
    <name type="ordered locus">Gura_2196</name>
</gene>
<feature type="chain" id="PRO_1000074705" description="Aspartate--tRNA(Asp/Asn) ligase">
    <location>
        <begin position="1"/>
        <end position="593"/>
    </location>
</feature>
<feature type="region of interest" description="Aspartate" evidence="1">
    <location>
        <begin position="206"/>
        <end position="209"/>
    </location>
</feature>
<feature type="binding site" evidence="1">
    <location>
        <position position="182"/>
    </location>
    <ligand>
        <name>L-aspartate</name>
        <dbReference type="ChEBI" id="CHEBI:29991"/>
    </ligand>
</feature>
<feature type="binding site" evidence="1">
    <location>
        <begin position="228"/>
        <end position="230"/>
    </location>
    <ligand>
        <name>ATP</name>
        <dbReference type="ChEBI" id="CHEBI:30616"/>
    </ligand>
</feature>
<feature type="binding site" evidence="1">
    <location>
        <position position="228"/>
    </location>
    <ligand>
        <name>L-aspartate</name>
        <dbReference type="ChEBI" id="CHEBI:29991"/>
    </ligand>
</feature>
<feature type="binding site" evidence="1">
    <location>
        <position position="237"/>
    </location>
    <ligand>
        <name>ATP</name>
        <dbReference type="ChEBI" id="CHEBI:30616"/>
    </ligand>
</feature>
<feature type="binding site" evidence="1">
    <location>
        <position position="455"/>
    </location>
    <ligand>
        <name>L-aspartate</name>
        <dbReference type="ChEBI" id="CHEBI:29991"/>
    </ligand>
</feature>
<feature type="binding site" evidence="1">
    <location>
        <position position="489"/>
    </location>
    <ligand>
        <name>ATP</name>
        <dbReference type="ChEBI" id="CHEBI:30616"/>
    </ligand>
</feature>
<feature type="binding site" evidence="1">
    <location>
        <position position="496"/>
    </location>
    <ligand>
        <name>L-aspartate</name>
        <dbReference type="ChEBI" id="CHEBI:29991"/>
    </ligand>
</feature>
<feature type="binding site" evidence="1">
    <location>
        <begin position="541"/>
        <end position="544"/>
    </location>
    <ligand>
        <name>ATP</name>
        <dbReference type="ChEBI" id="CHEBI:30616"/>
    </ligand>
</feature>
<feature type="site" description="Important for tRNA non-discrimination" evidence="1">
    <location>
        <position position="38"/>
    </location>
</feature>
<feature type="site" description="Important for tRNA non-discrimination" evidence="1">
    <location>
        <position position="90"/>
    </location>
</feature>
<organism>
    <name type="scientific">Geotalea uraniireducens (strain Rf4)</name>
    <name type="common">Geobacter uraniireducens</name>
    <dbReference type="NCBI Taxonomy" id="351605"/>
    <lineage>
        <taxon>Bacteria</taxon>
        <taxon>Pseudomonadati</taxon>
        <taxon>Thermodesulfobacteriota</taxon>
        <taxon>Desulfuromonadia</taxon>
        <taxon>Geobacterales</taxon>
        <taxon>Geobacteraceae</taxon>
        <taxon>Geotalea</taxon>
    </lineage>
</organism>
<accession>A5G3L5</accession>
<dbReference type="EC" id="6.1.1.23" evidence="1"/>
<dbReference type="EMBL" id="CP000698">
    <property type="protein sequence ID" value="ABQ26383.1"/>
    <property type="molecule type" value="Genomic_DNA"/>
</dbReference>
<dbReference type="RefSeq" id="WP_011939082.1">
    <property type="nucleotide sequence ID" value="NC_009483.1"/>
</dbReference>
<dbReference type="SMR" id="A5G3L5"/>
<dbReference type="STRING" id="351605.Gura_2196"/>
<dbReference type="KEGG" id="gur:Gura_2196"/>
<dbReference type="HOGENOM" id="CLU_014330_3_2_7"/>
<dbReference type="OrthoDB" id="9802326at2"/>
<dbReference type="Proteomes" id="UP000006695">
    <property type="component" value="Chromosome"/>
</dbReference>
<dbReference type="GO" id="GO:0005737">
    <property type="term" value="C:cytoplasm"/>
    <property type="evidence" value="ECO:0007669"/>
    <property type="project" value="UniProtKB-SubCell"/>
</dbReference>
<dbReference type="GO" id="GO:0004815">
    <property type="term" value="F:aspartate-tRNA ligase activity"/>
    <property type="evidence" value="ECO:0007669"/>
    <property type="project" value="UniProtKB-UniRule"/>
</dbReference>
<dbReference type="GO" id="GO:0050560">
    <property type="term" value="F:aspartate-tRNA(Asn) ligase activity"/>
    <property type="evidence" value="ECO:0007669"/>
    <property type="project" value="UniProtKB-EC"/>
</dbReference>
<dbReference type="GO" id="GO:0005524">
    <property type="term" value="F:ATP binding"/>
    <property type="evidence" value="ECO:0007669"/>
    <property type="project" value="UniProtKB-UniRule"/>
</dbReference>
<dbReference type="GO" id="GO:0003676">
    <property type="term" value="F:nucleic acid binding"/>
    <property type="evidence" value="ECO:0007669"/>
    <property type="project" value="InterPro"/>
</dbReference>
<dbReference type="GO" id="GO:0006422">
    <property type="term" value="P:aspartyl-tRNA aminoacylation"/>
    <property type="evidence" value="ECO:0007669"/>
    <property type="project" value="UniProtKB-UniRule"/>
</dbReference>
<dbReference type="CDD" id="cd00777">
    <property type="entry name" value="AspRS_core"/>
    <property type="match status" value="1"/>
</dbReference>
<dbReference type="CDD" id="cd04317">
    <property type="entry name" value="EcAspRS_like_N"/>
    <property type="match status" value="1"/>
</dbReference>
<dbReference type="Gene3D" id="3.30.930.10">
    <property type="entry name" value="Bira Bifunctional Protein, Domain 2"/>
    <property type="match status" value="1"/>
</dbReference>
<dbReference type="Gene3D" id="3.30.1360.30">
    <property type="entry name" value="GAD-like domain"/>
    <property type="match status" value="1"/>
</dbReference>
<dbReference type="Gene3D" id="2.40.50.140">
    <property type="entry name" value="Nucleic acid-binding proteins"/>
    <property type="match status" value="1"/>
</dbReference>
<dbReference type="HAMAP" id="MF_00044">
    <property type="entry name" value="Asp_tRNA_synth_type1"/>
    <property type="match status" value="1"/>
</dbReference>
<dbReference type="InterPro" id="IPR004364">
    <property type="entry name" value="Aa-tRNA-synt_II"/>
</dbReference>
<dbReference type="InterPro" id="IPR006195">
    <property type="entry name" value="aa-tRNA-synth_II"/>
</dbReference>
<dbReference type="InterPro" id="IPR045864">
    <property type="entry name" value="aa-tRNA-synth_II/BPL/LPL"/>
</dbReference>
<dbReference type="InterPro" id="IPR004524">
    <property type="entry name" value="Asp-tRNA-ligase_1"/>
</dbReference>
<dbReference type="InterPro" id="IPR047089">
    <property type="entry name" value="Asp-tRNA-ligase_1_N"/>
</dbReference>
<dbReference type="InterPro" id="IPR002312">
    <property type="entry name" value="Asp/Asn-tRNA-synth_IIb"/>
</dbReference>
<dbReference type="InterPro" id="IPR047090">
    <property type="entry name" value="AspRS_core"/>
</dbReference>
<dbReference type="InterPro" id="IPR004115">
    <property type="entry name" value="GAD-like_sf"/>
</dbReference>
<dbReference type="InterPro" id="IPR029351">
    <property type="entry name" value="GAD_dom"/>
</dbReference>
<dbReference type="InterPro" id="IPR012340">
    <property type="entry name" value="NA-bd_OB-fold"/>
</dbReference>
<dbReference type="InterPro" id="IPR004365">
    <property type="entry name" value="NA-bd_OB_tRNA"/>
</dbReference>
<dbReference type="NCBIfam" id="TIGR00459">
    <property type="entry name" value="aspS_bact"/>
    <property type="match status" value="1"/>
</dbReference>
<dbReference type="NCBIfam" id="NF001750">
    <property type="entry name" value="PRK00476.1"/>
    <property type="match status" value="1"/>
</dbReference>
<dbReference type="PANTHER" id="PTHR22594:SF5">
    <property type="entry name" value="ASPARTATE--TRNA LIGASE, MITOCHONDRIAL"/>
    <property type="match status" value="1"/>
</dbReference>
<dbReference type="PANTHER" id="PTHR22594">
    <property type="entry name" value="ASPARTYL/LYSYL-TRNA SYNTHETASE"/>
    <property type="match status" value="1"/>
</dbReference>
<dbReference type="Pfam" id="PF02938">
    <property type="entry name" value="GAD"/>
    <property type="match status" value="1"/>
</dbReference>
<dbReference type="Pfam" id="PF00152">
    <property type="entry name" value="tRNA-synt_2"/>
    <property type="match status" value="1"/>
</dbReference>
<dbReference type="Pfam" id="PF01336">
    <property type="entry name" value="tRNA_anti-codon"/>
    <property type="match status" value="1"/>
</dbReference>
<dbReference type="PRINTS" id="PR01042">
    <property type="entry name" value="TRNASYNTHASP"/>
</dbReference>
<dbReference type="SUPFAM" id="SSF55681">
    <property type="entry name" value="Class II aaRS and biotin synthetases"/>
    <property type="match status" value="1"/>
</dbReference>
<dbReference type="SUPFAM" id="SSF55261">
    <property type="entry name" value="GAD domain-like"/>
    <property type="match status" value="1"/>
</dbReference>
<dbReference type="SUPFAM" id="SSF50249">
    <property type="entry name" value="Nucleic acid-binding proteins"/>
    <property type="match status" value="1"/>
</dbReference>
<dbReference type="PROSITE" id="PS50862">
    <property type="entry name" value="AA_TRNA_LIGASE_II"/>
    <property type="match status" value="1"/>
</dbReference>
<comment type="function">
    <text evidence="1">Aspartyl-tRNA synthetase with relaxed tRNA specificity since it is able to aspartylate not only its cognate tRNA(Asp) but also tRNA(Asn). Reaction proceeds in two steps: L-aspartate is first activated by ATP to form Asp-AMP and then transferred to the acceptor end of tRNA(Asp/Asn).</text>
</comment>
<comment type="catalytic activity">
    <reaction evidence="1">
        <text>tRNA(Asx) + L-aspartate + ATP = L-aspartyl-tRNA(Asx) + AMP + diphosphate</text>
        <dbReference type="Rhea" id="RHEA:18349"/>
        <dbReference type="Rhea" id="RHEA-COMP:9710"/>
        <dbReference type="Rhea" id="RHEA-COMP:9711"/>
        <dbReference type="ChEBI" id="CHEBI:29991"/>
        <dbReference type="ChEBI" id="CHEBI:30616"/>
        <dbReference type="ChEBI" id="CHEBI:33019"/>
        <dbReference type="ChEBI" id="CHEBI:78442"/>
        <dbReference type="ChEBI" id="CHEBI:78516"/>
        <dbReference type="ChEBI" id="CHEBI:456215"/>
        <dbReference type="EC" id="6.1.1.23"/>
    </reaction>
</comment>
<comment type="subunit">
    <text evidence="1">Homodimer.</text>
</comment>
<comment type="subcellular location">
    <subcellularLocation>
        <location evidence="1">Cytoplasm</location>
    </subcellularLocation>
</comment>
<comment type="similarity">
    <text evidence="1">Belongs to the class-II aminoacyl-tRNA synthetase family. Type 1 subfamily.</text>
</comment>
<keyword id="KW-0030">Aminoacyl-tRNA synthetase</keyword>
<keyword id="KW-0067">ATP-binding</keyword>
<keyword id="KW-0963">Cytoplasm</keyword>
<keyword id="KW-0436">Ligase</keyword>
<keyword id="KW-0547">Nucleotide-binding</keyword>
<keyword id="KW-0648">Protein biosynthesis</keyword>
<keyword id="KW-1185">Reference proteome</keyword>
<sequence>MIDFLGGWKRTHYCGALTAGDIGKEVVLMGWAHRRRDHGGLIFVDLRDREGLAQVVFDPDNSPAAHKKAEAIRNEYVVAIRGKVIPRPDGTVNANLKTGEVEVLVSECKMLNRSKALPFTLDDYVDVAENLRLKHRYLDLRRPVLQENLILRSKVAQITRQYLTGNGFLELETPFLTKSTPEGARDFLVPSRINRGEFYALPQSPQLFKQILMVSGFDRYFQVVRCFRDEDLRADRQPEFTQIDCEMSFIDREDIITVMEGLIARIFTETKGATVNLPIPRMTYAESIRRFGVDNPDLRFGLELVELSDIVKNAGFKVFADVVAGGGIVKGLNAKGCGGMSRKEIDDLTEFAKIYGAKGLAYVKMTAEGWQSPIAKFFTAEEISAMDKAFDAKEGDLLLFVADKPKVVNDSLGKLRNHLAKSLGLLDKDTFNFVWITDFPLLEWDEEEKRWAAVHHPFTAPMDEDLEYVESDPGRCRAKAYDLVLNGNEIGGGSIRIHQEKIQSLMFKMLGHSEEDARTKFGFLLDAMDYGAPPHGGIAFGLDRLIMLLTGSDSIRDVIAFPKTQKGACLMSEAPSAVDMKQLRELGLKTVVK</sequence>
<reference key="1">
    <citation type="submission" date="2007-05" db="EMBL/GenBank/DDBJ databases">
        <title>Complete sequence of Geobacter uraniireducens Rf4.</title>
        <authorList>
            <consortium name="US DOE Joint Genome Institute"/>
            <person name="Copeland A."/>
            <person name="Lucas S."/>
            <person name="Lapidus A."/>
            <person name="Barry K."/>
            <person name="Detter J.C."/>
            <person name="Glavina del Rio T."/>
            <person name="Hammon N."/>
            <person name="Israni S."/>
            <person name="Dalin E."/>
            <person name="Tice H."/>
            <person name="Pitluck S."/>
            <person name="Chertkov O."/>
            <person name="Brettin T."/>
            <person name="Bruce D."/>
            <person name="Han C."/>
            <person name="Schmutz J."/>
            <person name="Larimer F."/>
            <person name="Land M."/>
            <person name="Hauser L."/>
            <person name="Kyrpides N."/>
            <person name="Mikhailova N."/>
            <person name="Shelobolina E."/>
            <person name="Aklujkar M."/>
            <person name="Lovley D."/>
            <person name="Richardson P."/>
        </authorList>
    </citation>
    <scope>NUCLEOTIDE SEQUENCE [LARGE SCALE GENOMIC DNA]</scope>
    <source>
        <strain>ATCC BAA-1134 / JCM 13001 / Rf4</strain>
    </source>
</reference>
<proteinExistence type="inferred from homology"/>
<protein>
    <recommendedName>
        <fullName evidence="1">Aspartate--tRNA(Asp/Asn) ligase</fullName>
        <ecNumber evidence="1">6.1.1.23</ecNumber>
    </recommendedName>
    <alternativeName>
        <fullName evidence="1">Aspartyl-tRNA synthetase</fullName>
        <shortName evidence="1">AspRS</shortName>
    </alternativeName>
    <alternativeName>
        <fullName evidence="1">Non-discriminating aspartyl-tRNA synthetase</fullName>
        <shortName evidence="1">ND-AspRS</shortName>
    </alternativeName>
</protein>
<evidence type="ECO:0000255" key="1">
    <source>
        <dbReference type="HAMAP-Rule" id="MF_00044"/>
    </source>
</evidence>